<sequence length="245" mass="27265">MKNIIVIKLGGIAIENLNDAFIQQINAWHLENKKIIIVHGGGQVISNLLTKNNHSTIKIDGMRVTAKNDLPIIYDALINIVGHQLLERLKESNLEFFQFKEKIKELVSAEFLNKNIYGYVGKVKEINTMLLEKMLSRDIIPIITSLGVNEQGEYLNVNADHLATAIAKKLKVEKLVYMTDVPGVIEKDKTLATLTINEAKTKIENKIITGGMIPKIESAIQTLESGVESILIANNLQKGTIIRGD</sequence>
<accession>Q5HP23</accession>
<feature type="chain" id="PRO_0000112669" description="Acetylglutamate kinase">
    <location>
        <begin position="1"/>
        <end position="245"/>
    </location>
</feature>
<feature type="binding site" evidence="1">
    <location>
        <begin position="41"/>
        <end position="42"/>
    </location>
    <ligand>
        <name>substrate</name>
    </ligand>
</feature>
<feature type="binding site" evidence="1">
    <location>
        <position position="63"/>
    </location>
    <ligand>
        <name>substrate</name>
    </ligand>
</feature>
<feature type="binding site" evidence="1">
    <location>
        <position position="156"/>
    </location>
    <ligand>
        <name>substrate</name>
    </ligand>
</feature>
<feature type="site" description="Transition state stabilizer" evidence="1">
    <location>
        <position position="8"/>
    </location>
</feature>
<feature type="site" description="Transition state stabilizer" evidence="1">
    <location>
        <position position="215"/>
    </location>
</feature>
<evidence type="ECO:0000255" key="1">
    <source>
        <dbReference type="HAMAP-Rule" id="MF_00082"/>
    </source>
</evidence>
<reference key="1">
    <citation type="journal article" date="2005" name="J. Bacteriol.">
        <title>Insights on evolution of virulence and resistance from the complete genome analysis of an early methicillin-resistant Staphylococcus aureus strain and a biofilm-producing methicillin-resistant Staphylococcus epidermidis strain.</title>
        <authorList>
            <person name="Gill S.R."/>
            <person name="Fouts D.E."/>
            <person name="Archer G.L."/>
            <person name="Mongodin E.F."/>
            <person name="DeBoy R.T."/>
            <person name="Ravel J."/>
            <person name="Paulsen I.T."/>
            <person name="Kolonay J.F."/>
            <person name="Brinkac L.M."/>
            <person name="Beanan M.J."/>
            <person name="Dodson R.J."/>
            <person name="Daugherty S.C."/>
            <person name="Madupu R."/>
            <person name="Angiuoli S.V."/>
            <person name="Durkin A.S."/>
            <person name="Haft D.H."/>
            <person name="Vamathevan J.J."/>
            <person name="Khouri H."/>
            <person name="Utterback T.R."/>
            <person name="Lee C."/>
            <person name="Dimitrov G."/>
            <person name="Jiang L."/>
            <person name="Qin H."/>
            <person name="Weidman J."/>
            <person name="Tran K."/>
            <person name="Kang K.H."/>
            <person name="Hance I.R."/>
            <person name="Nelson K.E."/>
            <person name="Fraser C.M."/>
        </authorList>
    </citation>
    <scope>NUCLEOTIDE SEQUENCE [LARGE SCALE GENOMIC DNA]</scope>
    <source>
        <strain>ATCC 35984 / DSM 28319 / BCRC 17069 / CCUG 31568 / BM 3577 / RP62A</strain>
    </source>
</reference>
<name>ARGB_STAEQ</name>
<dbReference type="EC" id="2.7.2.8" evidence="1"/>
<dbReference type="EMBL" id="CP000029">
    <property type="protein sequence ID" value="AAW54474.1"/>
    <property type="molecule type" value="Genomic_DNA"/>
</dbReference>
<dbReference type="RefSeq" id="WP_001830946.1">
    <property type="nucleotide sequence ID" value="NC_002976.3"/>
</dbReference>
<dbReference type="SMR" id="Q5HP23"/>
<dbReference type="STRING" id="176279.SERP1090"/>
<dbReference type="GeneID" id="50018672"/>
<dbReference type="KEGG" id="ser:SERP1090"/>
<dbReference type="eggNOG" id="COG0548">
    <property type="taxonomic scope" value="Bacteria"/>
</dbReference>
<dbReference type="HOGENOM" id="CLU_053680_1_0_9"/>
<dbReference type="UniPathway" id="UPA00068">
    <property type="reaction ID" value="UER00107"/>
</dbReference>
<dbReference type="Proteomes" id="UP000000531">
    <property type="component" value="Chromosome"/>
</dbReference>
<dbReference type="GO" id="GO:0005737">
    <property type="term" value="C:cytoplasm"/>
    <property type="evidence" value="ECO:0007669"/>
    <property type="project" value="UniProtKB-SubCell"/>
</dbReference>
<dbReference type="GO" id="GO:0003991">
    <property type="term" value="F:acetylglutamate kinase activity"/>
    <property type="evidence" value="ECO:0007669"/>
    <property type="project" value="UniProtKB-UniRule"/>
</dbReference>
<dbReference type="GO" id="GO:0005524">
    <property type="term" value="F:ATP binding"/>
    <property type="evidence" value="ECO:0007669"/>
    <property type="project" value="UniProtKB-UniRule"/>
</dbReference>
<dbReference type="GO" id="GO:0042450">
    <property type="term" value="P:arginine biosynthetic process via ornithine"/>
    <property type="evidence" value="ECO:0007669"/>
    <property type="project" value="UniProtKB-UniRule"/>
</dbReference>
<dbReference type="GO" id="GO:0006526">
    <property type="term" value="P:L-arginine biosynthetic process"/>
    <property type="evidence" value="ECO:0007669"/>
    <property type="project" value="UniProtKB-UniPathway"/>
</dbReference>
<dbReference type="CDD" id="cd04238">
    <property type="entry name" value="AAK_NAGK-like"/>
    <property type="match status" value="1"/>
</dbReference>
<dbReference type="Gene3D" id="3.40.1160.10">
    <property type="entry name" value="Acetylglutamate kinase-like"/>
    <property type="match status" value="1"/>
</dbReference>
<dbReference type="HAMAP" id="MF_00082">
    <property type="entry name" value="ArgB"/>
    <property type="match status" value="1"/>
</dbReference>
<dbReference type="InterPro" id="IPR036393">
    <property type="entry name" value="AceGlu_kinase-like_sf"/>
</dbReference>
<dbReference type="InterPro" id="IPR004662">
    <property type="entry name" value="AcgluKinase_fam"/>
</dbReference>
<dbReference type="InterPro" id="IPR037528">
    <property type="entry name" value="ArgB"/>
</dbReference>
<dbReference type="InterPro" id="IPR001048">
    <property type="entry name" value="Asp/Glu/Uridylate_kinase"/>
</dbReference>
<dbReference type="NCBIfam" id="TIGR00761">
    <property type="entry name" value="argB"/>
    <property type="match status" value="1"/>
</dbReference>
<dbReference type="PANTHER" id="PTHR23342">
    <property type="entry name" value="N-ACETYLGLUTAMATE SYNTHASE"/>
    <property type="match status" value="1"/>
</dbReference>
<dbReference type="PANTHER" id="PTHR23342:SF0">
    <property type="entry name" value="N-ACETYLGLUTAMATE SYNTHASE, MITOCHONDRIAL"/>
    <property type="match status" value="1"/>
</dbReference>
<dbReference type="Pfam" id="PF00696">
    <property type="entry name" value="AA_kinase"/>
    <property type="match status" value="1"/>
</dbReference>
<dbReference type="PIRSF" id="PIRSF000728">
    <property type="entry name" value="NAGK"/>
    <property type="match status" value="1"/>
</dbReference>
<dbReference type="SUPFAM" id="SSF53633">
    <property type="entry name" value="Carbamate kinase-like"/>
    <property type="match status" value="1"/>
</dbReference>
<proteinExistence type="inferred from homology"/>
<organism>
    <name type="scientific">Staphylococcus epidermidis (strain ATCC 35984 / DSM 28319 / BCRC 17069 / CCUG 31568 / BM 3577 / RP62A)</name>
    <dbReference type="NCBI Taxonomy" id="176279"/>
    <lineage>
        <taxon>Bacteria</taxon>
        <taxon>Bacillati</taxon>
        <taxon>Bacillota</taxon>
        <taxon>Bacilli</taxon>
        <taxon>Bacillales</taxon>
        <taxon>Staphylococcaceae</taxon>
        <taxon>Staphylococcus</taxon>
    </lineage>
</organism>
<protein>
    <recommendedName>
        <fullName evidence="1">Acetylglutamate kinase</fullName>
        <ecNumber evidence="1">2.7.2.8</ecNumber>
    </recommendedName>
    <alternativeName>
        <fullName evidence="1">N-acetyl-L-glutamate 5-phosphotransferase</fullName>
    </alternativeName>
    <alternativeName>
        <fullName evidence="1">NAG kinase</fullName>
        <shortName evidence="1">NAGK</shortName>
    </alternativeName>
</protein>
<comment type="function">
    <text evidence="1">Catalyzes the ATP-dependent phosphorylation of N-acetyl-L-glutamate.</text>
</comment>
<comment type="catalytic activity">
    <reaction evidence="1">
        <text>N-acetyl-L-glutamate + ATP = N-acetyl-L-glutamyl 5-phosphate + ADP</text>
        <dbReference type="Rhea" id="RHEA:14629"/>
        <dbReference type="ChEBI" id="CHEBI:30616"/>
        <dbReference type="ChEBI" id="CHEBI:44337"/>
        <dbReference type="ChEBI" id="CHEBI:57936"/>
        <dbReference type="ChEBI" id="CHEBI:456216"/>
        <dbReference type="EC" id="2.7.2.8"/>
    </reaction>
</comment>
<comment type="pathway">
    <text evidence="1">Amino-acid biosynthesis; L-arginine biosynthesis; N(2)-acetyl-L-ornithine from L-glutamate: step 2/4.</text>
</comment>
<comment type="subcellular location">
    <subcellularLocation>
        <location evidence="1">Cytoplasm</location>
    </subcellularLocation>
</comment>
<comment type="similarity">
    <text evidence="1">Belongs to the acetylglutamate kinase family. ArgB subfamily.</text>
</comment>
<gene>
    <name evidence="1" type="primary">argB</name>
    <name type="ordered locus">SERP1090</name>
</gene>
<keyword id="KW-0028">Amino-acid biosynthesis</keyword>
<keyword id="KW-0055">Arginine biosynthesis</keyword>
<keyword id="KW-0067">ATP-binding</keyword>
<keyword id="KW-0963">Cytoplasm</keyword>
<keyword id="KW-0418">Kinase</keyword>
<keyword id="KW-0547">Nucleotide-binding</keyword>
<keyword id="KW-1185">Reference proteome</keyword>
<keyword id="KW-0808">Transferase</keyword>